<accession>F5HGU6</accession>
<keyword id="KW-0472">Membrane</keyword>
<keyword id="KW-1185">Reference proteome</keyword>
<keyword id="KW-0732">Signal</keyword>
<keyword id="KW-0812">Transmembrane</keyword>
<keyword id="KW-1133">Transmembrane helix</keyword>
<keyword id="KW-0261">Viral envelope protein</keyword>
<keyword id="KW-0946">Virion</keyword>
<name>UL132_HCMVM</name>
<gene>
    <name type="primary">UL132</name>
</gene>
<comment type="subcellular location">
    <subcellularLocation>
        <location evidence="3">Virion membrane</location>
        <topology evidence="3">Single-pass membrane protein</topology>
    </subcellularLocation>
</comment>
<comment type="similarity">
    <text evidence="3">Belongs to the HHV-5 UL132 family.</text>
</comment>
<sequence length="270" mass="29782">MPAPRGPLRATFLALVAFGLLLQIDLSDVTNVTSSTKVPTSTSNRNSVDNATSSGPTTGINMTTTHESSVHNVRNNEIMKVLAILFYIVTGTSIFSFIAVLVAVVYSSCCKHPGRFRFADEEAVNLLDDTDDSGGSSPFGSGSRRGSQIPAGFCSSSPYQRLETRDWDEEEEASAARERMKHDPENVIYFRKDGNLDTSFVNPNYGRGSPLTIESHLSDNEEDPIRYYVSVYDELTASEMEEPSNSTSWQIPKLMKVAMQPVSLRDPEYD</sequence>
<dbReference type="EMBL" id="AY446894">
    <property type="protein sequence ID" value="AAR31671.1"/>
    <property type="molecule type" value="Genomic_DNA"/>
</dbReference>
<dbReference type="RefSeq" id="YP_081567.1">
    <property type="nucleotide sequence ID" value="NC_006273.2"/>
</dbReference>
<dbReference type="GeneID" id="3077441"/>
<dbReference type="KEGG" id="vg:3077441"/>
<dbReference type="Reactome" id="R-HSA-9609690">
    <property type="pathway name" value="HCMV Early Events"/>
</dbReference>
<dbReference type="Reactome" id="R-HSA-9610379">
    <property type="pathway name" value="HCMV Late Events"/>
</dbReference>
<dbReference type="Proteomes" id="UP000000938">
    <property type="component" value="Segment"/>
</dbReference>
<dbReference type="GO" id="GO:0005886">
    <property type="term" value="C:plasma membrane"/>
    <property type="evidence" value="ECO:0000304"/>
    <property type="project" value="Reactome"/>
</dbReference>
<dbReference type="GO" id="GO:0019031">
    <property type="term" value="C:viral envelope"/>
    <property type="evidence" value="ECO:0000304"/>
    <property type="project" value="Reactome"/>
</dbReference>
<dbReference type="GO" id="GO:0055036">
    <property type="term" value="C:virion membrane"/>
    <property type="evidence" value="ECO:0007669"/>
    <property type="project" value="UniProtKB-SubCell"/>
</dbReference>
<dbReference type="InterPro" id="IPR021023">
    <property type="entry name" value="UL132"/>
</dbReference>
<dbReference type="Pfam" id="PF11359">
    <property type="entry name" value="gpUL132"/>
    <property type="match status" value="1"/>
</dbReference>
<organism>
    <name type="scientific">Human cytomegalovirus (strain Merlin)</name>
    <name type="common">HHV-5</name>
    <name type="synonym">Human herpesvirus 5</name>
    <dbReference type="NCBI Taxonomy" id="295027"/>
    <lineage>
        <taxon>Viruses</taxon>
        <taxon>Duplodnaviria</taxon>
        <taxon>Heunggongvirae</taxon>
        <taxon>Peploviricota</taxon>
        <taxon>Herviviricetes</taxon>
        <taxon>Herpesvirales</taxon>
        <taxon>Orthoherpesviridae</taxon>
        <taxon>Betaherpesvirinae</taxon>
        <taxon>Cytomegalovirus</taxon>
        <taxon>Cytomegalovirus humanbeta5</taxon>
        <taxon>Human cytomegalovirus</taxon>
    </lineage>
</organism>
<proteinExistence type="inferred from homology"/>
<evidence type="ECO:0000255" key="1"/>
<evidence type="ECO:0000256" key="2">
    <source>
        <dbReference type="SAM" id="MobiDB-lite"/>
    </source>
</evidence>
<evidence type="ECO:0000305" key="3"/>
<reference key="1">
    <citation type="journal article" date="2004" name="J. Gen. Virol.">
        <title>Genetic content of wild-type human cytomegalovirus.</title>
        <authorList>
            <person name="Dolan A."/>
            <person name="Cunningham C."/>
            <person name="Hector R.D."/>
            <person name="Hassan-Walker A.F."/>
            <person name="Lee L."/>
            <person name="Addison C."/>
            <person name="Dargan D.J."/>
            <person name="McGeoch D.J."/>
            <person name="Gatherer D."/>
            <person name="Emery V.C."/>
            <person name="Griffiths P.D."/>
            <person name="Sinzger C."/>
            <person name="McSharry B.P."/>
            <person name="Wilkinson G.W.G."/>
            <person name="Davison A.J."/>
        </authorList>
    </citation>
    <scope>NUCLEOTIDE SEQUENCE [LARGE SCALE GENOMIC DNA]</scope>
</reference>
<feature type="signal peptide" evidence="1">
    <location>
        <begin position="1"/>
        <end position="27"/>
    </location>
</feature>
<feature type="chain" id="PRO_0000418243" description="Envelope glycoprotein UL132">
    <location>
        <begin position="28"/>
        <end position="270"/>
    </location>
</feature>
<feature type="transmembrane region" description="Helical" evidence="1">
    <location>
        <begin position="84"/>
        <end position="104"/>
    </location>
</feature>
<feature type="region of interest" description="Disordered" evidence="2">
    <location>
        <begin position="33"/>
        <end position="62"/>
    </location>
</feature>
<feature type="region of interest" description="Disordered" evidence="2">
    <location>
        <begin position="129"/>
        <end position="179"/>
    </location>
</feature>
<feature type="compositionally biased region" description="Low complexity" evidence="2">
    <location>
        <begin position="33"/>
        <end position="43"/>
    </location>
</feature>
<feature type="compositionally biased region" description="Polar residues" evidence="2">
    <location>
        <begin position="44"/>
        <end position="62"/>
    </location>
</feature>
<feature type="compositionally biased region" description="Low complexity" evidence="2">
    <location>
        <begin position="133"/>
        <end position="147"/>
    </location>
</feature>
<organismHost>
    <name type="scientific">Homo sapiens</name>
    <name type="common">Human</name>
    <dbReference type="NCBI Taxonomy" id="9606"/>
</organismHost>
<protein>
    <recommendedName>
        <fullName>Envelope glycoprotein UL132</fullName>
    </recommendedName>
</protein>